<proteinExistence type="inferred from homology"/>
<name>YQGF_ENT38</name>
<reference key="1">
    <citation type="journal article" date="2010" name="PLoS Genet.">
        <title>Genome sequence of the plant growth promoting endophytic bacterium Enterobacter sp. 638.</title>
        <authorList>
            <person name="Taghavi S."/>
            <person name="van der Lelie D."/>
            <person name="Hoffman A."/>
            <person name="Zhang Y.B."/>
            <person name="Walla M.D."/>
            <person name="Vangronsveld J."/>
            <person name="Newman L."/>
            <person name="Monchy S."/>
        </authorList>
    </citation>
    <scope>NUCLEOTIDE SEQUENCE [LARGE SCALE GENOMIC DNA]</scope>
    <source>
        <strain>638</strain>
    </source>
</reference>
<comment type="function">
    <text evidence="1">Could be a nuclease involved in processing of the 5'-end of pre-16S rRNA.</text>
</comment>
<comment type="subcellular location">
    <subcellularLocation>
        <location evidence="1">Cytoplasm</location>
    </subcellularLocation>
</comment>
<comment type="similarity">
    <text evidence="1">Belongs to the YqgF nuclease family.</text>
</comment>
<feature type="chain" id="PRO_1000061513" description="Putative pre-16S rRNA nuclease">
    <location>
        <begin position="1"/>
        <end position="138"/>
    </location>
</feature>
<organism>
    <name type="scientific">Enterobacter sp. (strain 638)</name>
    <dbReference type="NCBI Taxonomy" id="399742"/>
    <lineage>
        <taxon>Bacteria</taxon>
        <taxon>Pseudomonadati</taxon>
        <taxon>Pseudomonadota</taxon>
        <taxon>Gammaproteobacteria</taxon>
        <taxon>Enterobacterales</taxon>
        <taxon>Enterobacteriaceae</taxon>
        <taxon>Enterobacter</taxon>
    </lineage>
</organism>
<dbReference type="EC" id="3.1.-.-" evidence="1"/>
<dbReference type="EMBL" id="CP000653">
    <property type="protein sequence ID" value="ABP62015.1"/>
    <property type="molecule type" value="Genomic_DNA"/>
</dbReference>
<dbReference type="RefSeq" id="WP_015960343.1">
    <property type="nucleotide sequence ID" value="NC_009436.1"/>
</dbReference>
<dbReference type="SMR" id="A4WE85"/>
<dbReference type="STRING" id="399742.Ent638_3353"/>
<dbReference type="KEGG" id="ent:Ent638_3353"/>
<dbReference type="eggNOG" id="COG0816">
    <property type="taxonomic scope" value="Bacteria"/>
</dbReference>
<dbReference type="HOGENOM" id="CLU_098240_3_0_6"/>
<dbReference type="OrthoDB" id="9796140at2"/>
<dbReference type="Proteomes" id="UP000000230">
    <property type="component" value="Chromosome"/>
</dbReference>
<dbReference type="GO" id="GO:0005829">
    <property type="term" value="C:cytosol"/>
    <property type="evidence" value="ECO:0007669"/>
    <property type="project" value="TreeGrafter"/>
</dbReference>
<dbReference type="GO" id="GO:0004518">
    <property type="term" value="F:nuclease activity"/>
    <property type="evidence" value="ECO:0007669"/>
    <property type="project" value="UniProtKB-KW"/>
</dbReference>
<dbReference type="GO" id="GO:0000967">
    <property type="term" value="P:rRNA 5'-end processing"/>
    <property type="evidence" value="ECO:0007669"/>
    <property type="project" value="UniProtKB-UniRule"/>
</dbReference>
<dbReference type="CDD" id="cd16964">
    <property type="entry name" value="YqgF"/>
    <property type="match status" value="1"/>
</dbReference>
<dbReference type="FunFam" id="3.30.420.140:FF:000002">
    <property type="entry name" value="Putative pre-16S rRNA nuclease"/>
    <property type="match status" value="1"/>
</dbReference>
<dbReference type="Gene3D" id="3.30.420.140">
    <property type="entry name" value="YqgF/RNase H-like domain"/>
    <property type="match status" value="1"/>
</dbReference>
<dbReference type="HAMAP" id="MF_00651">
    <property type="entry name" value="Nuclease_YqgF"/>
    <property type="match status" value="1"/>
</dbReference>
<dbReference type="InterPro" id="IPR012337">
    <property type="entry name" value="RNaseH-like_sf"/>
</dbReference>
<dbReference type="InterPro" id="IPR005227">
    <property type="entry name" value="YqgF"/>
</dbReference>
<dbReference type="InterPro" id="IPR006641">
    <property type="entry name" value="YqgF/RNaseH-like_dom"/>
</dbReference>
<dbReference type="InterPro" id="IPR037027">
    <property type="entry name" value="YqgF/RNaseH-like_dom_sf"/>
</dbReference>
<dbReference type="NCBIfam" id="TIGR00250">
    <property type="entry name" value="RNAse_H_YqgF"/>
    <property type="match status" value="1"/>
</dbReference>
<dbReference type="PANTHER" id="PTHR33317">
    <property type="entry name" value="POLYNUCLEOTIDYL TRANSFERASE, RIBONUCLEASE H-LIKE SUPERFAMILY PROTEIN"/>
    <property type="match status" value="1"/>
</dbReference>
<dbReference type="PANTHER" id="PTHR33317:SF4">
    <property type="entry name" value="POLYNUCLEOTIDYL TRANSFERASE, RIBONUCLEASE H-LIKE SUPERFAMILY PROTEIN"/>
    <property type="match status" value="1"/>
</dbReference>
<dbReference type="Pfam" id="PF03652">
    <property type="entry name" value="RuvX"/>
    <property type="match status" value="1"/>
</dbReference>
<dbReference type="SMART" id="SM00732">
    <property type="entry name" value="YqgFc"/>
    <property type="match status" value="1"/>
</dbReference>
<dbReference type="SUPFAM" id="SSF53098">
    <property type="entry name" value="Ribonuclease H-like"/>
    <property type="match status" value="1"/>
</dbReference>
<gene>
    <name evidence="1" type="primary">yqgF</name>
    <name type="ordered locus">Ent638_3353</name>
</gene>
<keyword id="KW-0963">Cytoplasm</keyword>
<keyword id="KW-0378">Hydrolase</keyword>
<keyword id="KW-0540">Nuclease</keyword>
<keyword id="KW-0690">Ribosome biogenesis</keyword>
<sequence length="138" mass="14951">MSGTLLAFDFGTKSIGVAIGQRITGTARPLTAIKAQDGTPDWTLIERLLKEWQPEAVIVGLPLNMDGTEQPLTARARKFANKIHGRFGAVVKLHDERLSTVEARAGLFEHGGFRALNKGSVDSASAVIILESFFEQGF</sequence>
<accession>A4WE85</accession>
<protein>
    <recommendedName>
        <fullName evidence="1">Putative pre-16S rRNA nuclease</fullName>
        <ecNumber evidence="1">3.1.-.-</ecNumber>
    </recommendedName>
</protein>
<evidence type="ECO:0000255" key="1">
    <source>
        <dbReference type="HAMAP-Rule" id="MF_00651"/>
    </source>
</evidence>